<name>RL1_LATSS</name>
<comment type="function">
    <text evidence="1">Binds directly to 23S rRNA. The L1 stalk is quite mobile in the ribosome, and is involved in E site tRNA release.</text>
</comment>
<comment type="function">
    <text evidence="1">Protein L1 is also a translational repressor protein, it controls the translation of the L11 operon by binding to its mRNA.</text>
</comment>
<comment type="subunit">
    <text evidence="1">Part of the 50S ribosomal subunit.</text>
</comment>
<comment type="similarity">
    <text evidence="1">Belongs to the universal ribosomal protein uL1 family.</text>
</comment>
<feature type="chain" id="PRO_0000230612" description="Large ribosomal subunit protein uL1">
    <location>
        <begin position="1"/>
        <end position="229"/>
    </location>
</feature>
<evidence type="ECO:0000255" key="1">
    <source>
        <dbReference type="HAMAP-Rule" id="MF_01318"/>
    </source>
</evidence>
<evidence type="ECO:0000305" key="2"/>
<protein>
    <recommendedName>
        <fullName evidence="1">Large ribosomal subunit protein uL1</fullName>
    </recommendedName>
    <alternativeName>
        <fullName evidence="2">50S ribosomal protein L1</fullName>
    </alternativeName>
</protein>
<organism>
    <name type="scientific">Latilactobacillus sakei subsp. sakei (strain 23K)</name>
    <name type="common">Lactobacillus sakei subsp. sakei</name>
    <dbReference type="NCBI Taxonomy" id="314315"/>
    <lineage>
        <taxon>Bacteria</taxon>
        <taxon>Bacillati</taxon>
        <taxon>Bacillota</taxon>
        <taxon>Bacilli</taxon>
        <taxon>Lactobacillales</taxon>
        <taxon>Lactobacillaceae</taxon>
        <taxon>Latilactobacillus</taxon>
    </lineage>
</organism>
<accession>Q38V06</accession>
<sequence>MAKKGKNYLEAAKQVDATKAYTVEEAIDLVKKVDFAKFDASLEVAYRLNVDPKQADQQIRGAVVLPNGTGKTQRVIVFAQGEQAKQAEAAGADVVGAEDLVEKIQGGWLDFDVAVATPPMMAQVGRLGRVLGPKGLMPNPKTGTVTMDVTKAVNDIKAGQVAYRVDKAGIVHAPIGKVSFDAAKLVENFKAMQDVIIKARPASAKGQYITSLSVSSTFGPGVKVDVASF</sequence>
<proteinExistence type="inferred from homology"/>
<keyword id="KW-1185">Reference proteome</keyword>
<keyword id="KW-0678">Repressor</keyword>
<keyword id="KW-0687">Ribonucleoprotein</keyword>
<keyword id="KW-0689">Ribosomal protein</keyword>
<keyword id="KW-0694">RNA-binding</keyword>
<keyword id="KW-0699">rRNA-binding</keyword>
<keyword id="KW-0810">Translation regulation</keyword>
<keyword id="KW-0820">tRNA-binding</keyword>
<dbReference type="EMBL" id="CR936503">
    <property type="protein sequence ID" value="CAI55978.1"/>
    <property type="molecule type" value="Genomic_DNA"/>
</dbReference>
<dbReference type="RefSeq" id="WP_004270847.1">
    <property type="nucleotide sequence ID" value="NC_007576.1"/>
</dbReference>
<dbReference type="SMR" id="Q38V06"/>
<dbReference type="STRING" id="314315.LCA_1671"/>
<dbReference type="GeneID" id="49611119"/>
<dbReference type="KEGG" id="lsa:LCA_1671"/>
<dbReference type="eggNOG" id="COG0081">
    <property type="taxonomic scope" value="Bacteria"/>
</dbReference>
<dbReference type="HOGENOM" id="CLU_062853_0_0_9"/>
<dbReference type="OrthoDB" id="9803740at2"/>
<dbReference type="Proteomes" id="UP000002707">
    <property type="component" value="Chromosome"/>
</dbReference>
<dbReference type="GO" id="GO:0015934">
    <property type="term" value="C:large ribosomal subunit"/>
    <property type="evidence" value="ECO:0007669"/>
    <property type="project" value="InterPro"/>
</dbReference>
<dbReference type="GO" id="GO:0019843">
    <property type="term" value="F:rRNA binding"/>
    <property type="evidence" value="ECO:0007669"/>
    <property type="project" value="UniProtKB-UniRule"/>
</dbReference>
<dbReference type="GO" id="GO:0003735">
    <property type="term" value="F:structural constituent of ribosome"/>
    <property type="evidence" value="ECO:0007669"/>
    <property type="project" value="InterPro"/>
</dbReference>
<dbReference type="GO" id="GO:0000049">
    <property type="term" value="F:tRNA binding"/>
    <property type="evidence" value="ECO:0007669"/>
    <property type="project" value="UniProtKB-KW"/>
</dbReference>
<dbReference type="GO" id="GO:0006417">
    <property type="term" value="P:regulation of translation"/>
    <property type="evidence" value="ECO:0007669"/>
    <property type="project" value="UniProtKB-KW"/>
</dbReference>
<dbReference type="GO" id="GO:0006412">
    <property type="term" value="P:translation"/>
    <property type="evidence" value="ECO:0007669"/>
    <property type="project" value="UniProtKB-UniRule"/>
</dbReference>
<dbReference type="CDD" id="cd00403">
    <property type="entry name" value="Ribosomal_L1"/>
    <property type="match status" value="1"/>
</dbReference>
<dbReference type="FunFam" id="3.40.50.790:FF:000001">
    <property type="entry name" value="50S ribosomal protein L1"/>
    <property type="match status" value="1"/>
</dbReference>
<dbReference type="Gene3D" id="3.30.190.20">
    <property type="match status" value="1"/>
</dbReference>
<dbReference type="Gene3D" id="3.40.50.790">
    <property type="match status" value="1"/>
</dbReference>
<dbReference type="HAMAP" id="MF_01318_B">
    <property type="entry name" value="Ribosomal_uL1_B"/>
    <property type="match status" value="1"/>
</dbReference>
<dbReference type="InterPro" id="IPR005878">
    <property type="entry name" value="Ribosom_uL1_bac-type"/>
</dbReference>
<dbReference type="InterPro" id="IPR002143">
    <property type="entry name" value="Ribosomal_uL1"/>
</dbReference>
<dbReference type="InterPro" id="IPR023674">
    <property type="entry name" value="Ribosomal_uL1-like"/>
</dbReference>
<dbReference type="InterPro" id="IPR028364">
    <property type="entry name" value="Ribosomal_uL1/biogenesis"/>
</dbReference>
<dbReference type="InterPro" id="IPR016095">
    <property type="entry name" value="Ribosomal_uL1_3-a/b-sand"/>
</dbReference>
<dbReference type="InterPro" id="IPR023673">
    <property type="entry name" value="Ribosomal_uL1_CS"/>
</dbReference>
<dbReference type="NCBIfam" id="TIGR01169">
    <property type="entry name" value="rplA_bact"/>
    <property type="match status" value="1"/>
</dbReference>
<dbReference type="PANTHER" id="PTHR36427">
    <property type="entry name" value="54S RIBOSOMAL PROTEIN L1, MITOCHONDRIAL"/>
    <property type="match status" value="1"/>
</dbReference>
<dbReference type="PANTHER" id="PTHR36427:SF3">
    <property type="entry name" value="LARGE RIBOSOMAL SUBUNIT PROTEIN UL1M"/>
    <property type="match status" value="1"/>
</dbReference>
<dbReference type="Pfam" id="PF00687">
    <property type="entry name" value="Ribosomal_L1"/>
    <property type="match status" value="1"/>
</dbReference>
<dbReference type="PIRSF" id="PIRSF002155">
    <property type="entry name" value="Ribosomal_L1"/>
    <property type="match status" value="1"/>
</dbReference>
<dbReference type="SUPFAM" id="SSF56808">
    <property type="entry name" value="Ribosomal protein L1"/>
    <property type="match status" value="1"/>
</dbReference>
<dbReference type="PROSITE" id="PS01199">
    <property type="entry name" value="RIBOSOMAL_L1"/>
    <property type="match status" value="1"/>
</dbReference>
<gene>
    <name evidence="1" type="primary">rplA</name>
    <name type="ordered locus">LCA_1671</name>
</gene>
<reference key="1">
    <citation type="journal article" date="2005" name="Nat. Biotechnol.">
        <title>The complete genome sequence of the meat-borne lactic acid bacterium Lactobacillus sakei 23K.</title>
        <authorList>
            <person name="Chaillou S."/>
            <person name="Champomier-Verges M.-C."/>
            <person name="Cornet M."/>
            <person name="Crutz-Le Coq A.-M."/>
            <person name="Dudez A.-M."/>
            <person name="Martin V."/>
            <person name="Beaufils S."/>
            <person name="Darbon-Rongere E."/>
            <person name="Bossy R."/>
            <person name="Loux V."/>
            <person name="Zagorec M."/>
        </authorList>
    </citation>
    <scope>NUCLEOTIDE SEQUENCE [LARGE SCALE GENOMIC DNA]</scope>
    <source>
        <strain>23K</strain>
    </source>
</reference>